<dbReference type="EC" id="3.1.1.29" evidence="1"/>
<dbReference type="EMBL" id="CP000143">
    <property type="protein sequence ID" value="ABA80004.1"/>
    <property type="molecule type" value="Genomic_DNA"/>
</dbReference>
<dbReference type="RefSeq" id="WP_011338521.1">
    <property type="nucleotide sequence ID" value="NC_007493.2"/>
</dbReference>
<dbReference type="RefSeq" id="YP_353905.1">
    <property type="nucleotide sequence ID" value="NC_007493.2"/>
</dbReference>
<dbReference type="SMR" id="Q3IZN0"/>
<dbReference type="STRING" id="272943.RSP_0824"/>
<dbReference type="EnsemblBacteria" id="ABA80004">
    <property type="protein sequence ID" value="ABA80004"/>
    <property type="gene ID" value="RSP_0824"/>
</dbReference>
<dbReference type="GeneID" id="3718365"/>
<dbReference type="KEGG" id="rsp:RSP_0824"/>
<dbReference type="PATRIC" id="fig|272943.9.peg.2787"/>
<dbReference type="eggNOG" id="COG0193">
    <property type="taxonomic scope" value="Bacteria"/>
</dbReference>
<dbReference type="OrthoDB" id="9800507at2"/>
<dbReference type="PhylomeDB" id="Q3IZN0"/>
<dbReference type="Proteomes" id="UP000002703">
    <property type="component" value="Chromosome 1"/>
</dbReference>
<dbReference type="GO" id="GO:0005737">
    <property type="term" value="C:cytoplasm"/>
    <property type="evidence" value="ECO:0007669"/>
    <property type="project" value="UniProtKB-SubCell"/>
</dbReference>
<dbReference type="GO" id="GO:0004045">
    <property type="term" value="F:peptidyl-tRNA hydrolase activity"/>
    <property type="evidence" value="ECO:0007669"/>
    <property type="project" value="UniProtKB-UniRule"/>
</dbReference>
<dbReference type="GO" id="GO:0000049">
    <property type="term" value="F:tRNA binding"/>
    <property type="evidence" value="ECO:0007669"/>
    <property type="project" value="UniProtKB-UniRule"/>
</dbReference>
<dbReference type="GO" id="GO:0006515">
    <property type="term" value="P:protein quality control for misfolded or incompletely synthesized proteins"/>
    <property type="evidence" value="ECO:0007669"/>
    <property type="project" value="UniProtKB-UniRule"/>
</dbReference>
<dbReference type="GO" id="GO:0072344">
    <property type="term" value="P:rescue of stalled ribosome"/>
    <property type="evidence" value="ECO:0007669"/>
    <property type="project" value="UniProtKB-UniRule"/>
</dbReference>
<dbReference type="CDD" id="cd00462">
    <property type="entry name" value="PTH"/>
    <property type="match status" value="1"/>
</dbReference>
<dbReference type="FunFam" id="3.40.50.1470:FF:000001">
    <property type="entry name" value="Peptidyl-tRNA hydrolase"/>
    <property type="match status" value="1"/>
</dbReference>
<dbReference type="Gene3D" id="3.40.50.1470">
    <property type="entry name" value="Peptidyl-tRNA hydrolase"/>
    <property type="match status" value="1"/>
</dbReference>
<dbReference type="HAMAP" id="MF_00083">
    <property type="entry name" value="Pept_tRNA_hydro_bact"/>
    <property type="match status" value="1"/>
</dbReference>
<dbReference type="InterPro" id="IPR001328">
    <property type="entry name" value="Pept_tRNA_hydro"/>
</dbReference>
<dbReference type="InterPro" id="IPR018171">
    <property type="entry name" value="Pept_tRNA_hydro_CS"/>
</dbReference>
<dbReference type="InterPro" id="IPR036416">
    <property type="entry name" value="Pept_tRNA_hydro_sf"/>
</dbReference>
<dbReference type="NCBIfam" id="TIGR00447">
    <property type="entry name" value="pth"/>
    <property type="match status" value="1"/>
</dbReference>
<dbReference type="PANTHER" id="PTHR17224">
    <property type="entry name" value="PEPTIDYL-TRNA HYDROLASE"/>
    <property type="match status" value="1"/>
</dbReference>
<dbReference type="PANTHER" id="PTHR17224:SF1">
    <property type="entry name" value="PEPTIDYL-TRNA HYDROLASE"/>
    <property type="match status" value="1"/>
</dbReference>
<dbReference type="Pfam" id="PF01195">
    <property type="entry name" value="Pept_tRNA_hydro"/>
    <property type="match status" value="1"/>
</dbReference>
<dbReference type="SUPFAM" id="SSF53178">
    <property type="entry name" value="Peptidyl-tRNA hydrolase-like"/>
    <property type="match status" value="1"/>
</dbReference>
<dbReference type="PROSITE" id="PS01195">
    <property type="entry name" value="PEPT_TRNA_HYDROL_1"/>
    <property type="match status" value="1"/>
</dbReference>
<dbReference type="PROSITE" id="PS01196">
    <property type="entry name" value="PEPT_TRNA_HYDROL_2"/>
    <property type="match status" value="1"/>
</dbReference>
<comment type="function">
    <text evidence="1">Hydrolyzes ribosome-free peptidyl-tRNAs (with 1 or more amino acids incorporated), which drop off the ribosome during protein synthesis, or as a result of ribosome stalling.</text>
</comment>
<comment type="function">
    <text evidence="1">Catalyzes the release of premature peptidyl moieties from peptidyl-tRNA molecules trapped in stalled 50S ribosomal subunits, and thus maintains levels of free tRNAs and 50S ribosomes.</text>
</comment>
<comment type="catalytic activity">
    <reaction evidence="1">
        <text>an N-acyl-L-alpha-aminoacyl-tRNA + H2O = an N-acyl-L-amino acid + a tRNA + H(+)</text>
        <dbReference type="Rhea" id="RHEA:54448"/>
        <dbReference type="Rhea" id="RHEA-COMP:10123"/>
        <dbReference type="Rhea" id="RHEA-COMP:13883"/>
        <dbReference type="ChEBI" id="CHEBI:15377"/>
        <dbReference type="ChEBI" id="CHEBI:15378"/>
        <dbReference type="ChEBI" id="CHEBI:59874"/>
        <dbReference type="ChEBI" id="CHEBI:78442"/>
        <dbReference type="ChEBI" id="CHEBI:138191"/>
        <dbReference type="EC" id="3.1.1.29"/>
    </reaction>
</comment>
<comment type="subunit">
    <text evidence="1">Monomer.</text>
</comment>
<comment type="subcellular location">
    <subcellularLocation>
        <location evidence="1">Cytoplasm</location>
    </subcellularLocation>
</comment>
<comment type="similarity">
    <text evidence="1">Belongs to the PTH family.</text>
</comment>
<protein>
    <recommendedName>
        <fullName evidence="1">Peptidyl-tRNA hydrolase</fullName>
        <shortName evidence="1">Pth</shortName>
        <ecNumber evidence="1">3.1.1.29</ecNumber>
    </recommendedName>
</protein>
<organism>
    <name type="scientific">Cereibacter sphaeroides (strain ATCC 17023 / DSM 158 / JCM 6121 / CCUG 31486 / LMG 2827 / NBRC 12203 / NCIMB 8253 / ATH 2.4.1.)</name>
    <name type="common">Rhodobacter sphaeroides</name>
    <dbReference type="NCBI Taxonomy" id="272943"/>
    <lineage>
        <taxon>Bacteria</taxon>
        <taxon>Pseudomonadati</taxon>
        <taxon>Pseudomonadota</taxon>
        <taxon>Alphaproteobacteria</taxon>
        <taxon>Rhodobacterales</taxon>
        <taxon>Paracoccaceae</taxon>
        <taxon>Cereibacter</taxon>
    </lineage>
</organism>
<reference key="1">
    <citation type="submission" date="2005-09" db="EMBL/GenBank/DDBJ databases">
        <title>Complete sequence of chromosome 1 of Rhodobacter sphaeroides 2.4.1.</title>
        <authorList>
            <person name="Copeland A."/>
            <person name="Lucas S."/>
            <person name="Lapidus A."/>
            <person name="Barry K."/>
            <person name="Detter J.C."/>
            <person name="Glavina T."/>
            <person name="Hammon N."/>
            <person name="Israni S."/>
            <person name="Pitluck S."/>
            <person name="Richardson P."/>
            <person name="Mackenzie C."/>
            <person name="Choudhary M."/>
            <person name="Larimer F."/>
            <person name="Hauser L.J."/>
            <person name="Land M."/>
            <person name="Donohue T.J."/>
            <person name="Kaplan S."/>
        </authorList>
    </citation>
    <scope>NUCLEOTIDE SEQUENCE [LARGE SCALE GENOMIC DNA]</scope>
    <source>
        <strain>ATCC 17023 / DSM 158 / JCM 6121 / CCUG 31486 / LMG 2827 / NBRC 12203 / NCIMB 8253 / ATH 2.4.1.</strain>
    </source>
</reference>
<accession>Q3IZN0</accession>
<feature type="chain" id="PRO_0000264089" description="Peptidyl-tRNA hydrolase">
    <location>
        <begin position="1"/>
        <end position="225"/>
    </location>
</feature>
<feature type="region of interest" description="Disordered" evidence="2">
    <location>
        <begin position="184"/>
        <end position="225"/>
    </location>
</feature>
<feature type="compositionally biased region" description="Low complexity" evidence="2">
    <location>
        <begin position="198"/>
        <end position="209"/>
    </location>
</feature>
<feature type="compositionally biased region" description="Basic and acidic residues" evidence="2">
    <location>
        <begin position="211"/>
        <end position="225"/>
    </location>
</feature>
<feature type="active site" description="Proton acceptor" evidence="1">
    <location>
        <position position="19"/>
    </location>
</feature>
<feature type="binding site" evidence="1">
    <location>
        <position position="14"/>
    </location>
    <ligand>
        <name>tRNA</name>
        <dbReference type="ChEBI" id="CHEBI:17843"/>
    </ligand>
</feature>
<feature type="binding site" evidence="1">
    <location>
        <position position="64"/>
    </location>
    <ligand>
        <name>tRNA</name>
        <dbReference type="ChEBI" id="CHEBI:17843"/>
    </ligand>
</feature>
<feature type="binding site" evidence="1">
    <location>
        <position position="66"/>
    </location>
    <ligand>
        <name>tRNA</name>
        <dbReference type="ChEBI" id="CHEBI:17843"/>
    </ligand>
</feature>
<feature type="binding site" evidence="1">
    <location>
        <position position="112"/>
    </location>
    <ligand>
        <name>tRNA</name>
        <dbReference type="ChEBI" id="CHEBI:17843"/>
    </ligand>
</feature>
<feature type="site" description="Discriminates between blocked and unblocked aminoacyl-tRNA" evidence="1">
    <location>
        <position position="9"/>
    </location>
</feature>
<feature type="site" description="Stabilizes the basic form of H active site to accept a proton" evidence="1">
    <location>
        <position position="91"/>
    </location>
</feature>
<evidence type="ECO:0000255" key="1">
    <source>
        <dbReference type="HAMAP-Rule" id="MF_00083"/>
    </source>
</evidence>
<evidence type="ECO:0000256" key="2">
    <source>
        <dbReference type="SAM" id="MobiDB-lite"/>
    </source>
</evidence>
<keyword id="KW-0963">Cytoplasm</keyword>
<keyword id="KW-0378">Hydrolase</keyword>
<keyword id="KW-1185">Reference proteome</keyword>
<keyword id="KW-0694">RNA-binding</keyword>
<keyword id="KW-0820">tRNA-binding</keyword>
<gene>
    <name evidence="1" type="primary">pth</name>
    <name type="ordered locus">RHOS4_24360</name>
    <name type="ordered locus">RSP_0824</name>
</gene>
<proteinExistence type="inferred from homology"/>
<name>PTH_CERS4</name>
<sequence>MKLFVGLGNPGARYAGNRHNIGYMAVEAIAADHGFGPWRARFQGLTSEGRLGSEQVLLLKPETFMNLSGQSVGEAMRFYKLTPADVIVFHDELDLAPGKLRLKQGGGHAGHNGLRSIHAHVGEAYGRVRLGIGHPGHKDAVAPYVLSDFAKADQDWLADLLRGISDGAEALARGDGAKFQNAVALRMQPPKPEKPKPAAKAPEAQAPEAAPDERSALQKLADRFR</sequence>